<feature type="signal peptide" evidence="1">
    <location>
        <begin position="1"/>
        <end position="19"/>
    </location>
</feature>
<feature type="propeptide" id="PRO_0000442510" evidence="4">
    <location>
        <begin position="20"/>
        <end position="26"/>
    </location>
</feature>
<feature type="peptide" id="PRO_0000442511" description="LURY-1-1" evidence="2">
    <location>
        <begin position="29"/>
        <end position="35"/>
    </location>
</feature>
<feature type="peptide" id="PRO_0000442512" description="LURY-1-2" evidence="2">
    <location>
        <begin position="38"/>
        <end position="43"/>
    </location>
</feature>
<feature type="propeptide" id="PRO_0000442513" evidence="4">
    <location>
        <begin position="47"/>
        <end position="89"/>
    </location>
</feature>
<feature type="modified residue" description="Tyrosine amide" evidence="5">
    <location>
        <position position="35"/>
    </location>
</feature>
<feature type="modified residue" description="Tyrosine amide" evidence="5">
    <location>
        <position position="43"/>
    </location>
</feature>
<accession>Q9XW71</accession>
<sequence length="89" mass="10038">MLTRVPVLILAVIVMLALCQEPEKPEKRPALLSRYGRAVLPRYGKRSGNLMESSQNSLTEESSDVVCQLIDGKYICLPVDAVRFRPFFL</sequence>
<comment type="function">
    <molecule>LURY-1-1</molecule>
    <text evidence="2">Acts as a ligand for the npr-22 receptor and controls food-related processes including feeding, lifespan, egg-laying and roaming behavior. Secreted in the presence of food, leading to reduced feeding and roaming behavior and increased egg laying and lifespan. Activity may be latent under normal conditions but induced under conditions that cause hyperactivation of the pharynx such as abrupt refeeding after starvation.</text>
</comment>
<comment type="function">
    <molecule>LURY-1-2</molecule>
    <text evidence="2">Acts as a ligand for the npr-22 receptor and controls food-related processes including feeding, lifespan, egg-laying and roaming behavior. Secreted in the presence of food, leading to reduced feeding and roaming behavior and increased egg laying and lifespan. Activity may be latent under normal conditions but induced under conditions that cause hyperactivation of the pharynx such as abrupt refeeding after starvation.</text>
</comment>
<comment type="subcellular location">
    <molecule>LURY-1-1</molecule>
    <subcellularLocation>
        <location evidence="2">Secreted</location>
    </subcellularLocation>
    <text evidence="2">Secreted from the M1 and M2 pharyngeal neurons in a food-dependent manner with secretion positively controlled by the presence of food.</text>
</comment>
<comment type="subcellular location">
    <molecule>LURY-1-2</molecule>
    <subcellularLocation>
        <location evidence="2">Secreted</location>
    </subcellularLocation>
    <text evidence="2">Secreted from the M1 and M2 pharyngeal neurons in a food-dependent manner with secretion positively controlled by the presence of food.</text>
</comment>
<comment type="tissue specificity">
    <text evidence="2">Expressed in the M1 and M2 pharyngeal neurons from where the LURY-1-1 and LURY-1-2 peptides are secreted.</text>
</comment>
<comment type="developmental stage">
    <text evidence="2">In the M1 pharyngeal neuron, expressed in all larval stages and in adults. In the M2 pharyngeal neuron, expression is not detected in most L1-L3 larva but increases at the L4 larval stage.</text>
</comment>
<comment type="mass spectrometry" mass="818.34" method="MALDI" evidence="2">
    <molecule>LURY-1-1</molecule>
</comment>
<comment type="mass spectrometry" mass="717.25" method="MALDI" evidence="2">
    <molecule>LURY-1-2</molecule>
</comment>
<comment type="disruption phenotype">
    <text evidence="2">Eggs are retained in the body as normal during starvation but the number of eggs laid during the initial refeeding period is reduced and satiety-induced suppression of pharyngeal pumping is slower than wild-type.</text>
</comment>
<reference evidence="6" key="1">
    <citation type="journal article" date="1998" name="Science">
        <title>Genome sequence of the nematode C. elegans: a platform for investigating biology.</title>
        <authorList>
            <consortium name="The C. elegans sequencing consortium"/>
        </authorList>
    </citation>
    <scope>NUCLEOTIDE SEQUENCE [LARGE SCALE GENOMIC DNA]</scope>
    <source>
        <strain evidence="6">Bristol N2</strain>
    </source>
</reference>
<reference evidence="4" key="2">
    <citation type="journal article" date="2017" name="Elife">
        <title>Luqin-like RYamide peptides regulate food-evoked responses in C. elegans.</title>
        <authorList>
            <person name="Ohno H."/>
            <person name="Yoshida M."/>
            <person name="Sato T."/>
            <person name="Kato J."/>
            <person name="Miyazato M."/>
            <person name="Kojima M."/>
            <person name="Ida T."/>
            <person name="Iino Y."/>
        </authorList>
    </citation>
    <scope>PROTEIN SEQUENCE OF 29-35 AND 38-43</scope>
    <scope>FUNCTION</scope>
    <scope>SUBCELLULAR LOCATION</scope>
    <scope>TISSUE SPECIFICITY</scope>
    <scope>DEVELOPMENTAL STAGE</scope>
    <scope>MASS SPECTROMETRY</scope>
    <scope>DISRUPTION PHENOTYPE</scope>
    <scope>AMIDATION AT TYR-35 AND TYR-43</scope>
</reference>
<organism evidence="6">
    <name type="scientific">Caenorhabditis elegans</name>
    <dbReference type="NCBI Taxonomy" id="6239"/>
    <lineage>
        <taxon>Eukaryota</taxon>
        <taxon>Metazoa</taxon>
        <taxon>Ecdysozoa</taxon>
        <taxon>Nematoda</taxon>
        <taxon>Chromadorea</taxon>
        <taxon>Rhabditida</taxon>
        <taxon>Rhabditina</taxon>
        <taxon>Rhabditomorpha</taxon>
        <taxon>Rhabditoidea</taxon>
        <taxon>Rhabditidae</taxon>
        <taxon>Peloderinae</taxon>
        <taxon>Caenorhabditis</taxon>
    </lineage>
</organism>
<dbReference type="EMBL" id="BX284603">
    <property type="protein sequence ID" value="CAA22099.2"/>
    <property type="molecule type" value="Genomic_DNA"/>
</dbReference>
<dbReference type="RefSeq" id="NP_001255160.1">
    <property type="nucleotide sequence ID" value="NM_001268231.2"/>
</dbReference>
<dbReference type="FunCoup" id="Q9XW71">
    <property type="interactions" value="1522"/>
</dbReference>
<dbReference type="STRING" id="6239.Y75B8A.11a.1"/>
<dbReference type="PaxDb" id="6239-Y75B8A.11a"/>
<dbReference type="EnsemblMetazoa" id="Y75B8A.11a.1">
    <property type="protein sequence ID" value="Y75B8A.11a.1"/>
    <property type="gene ID" value="WBGene00013548"/>
</dbReference>
<dbReference type="GeneID" id="190703"/>
<dbReference type="KEGG" id="cel:CELE_Y75B8A.11"/>
<dbReference type="UCSC" id="Y75B8A.11">
    <property type="organism name" value="c. elegans"/>
</dbReference>
<dbReference type="AGR" id="WB:WBGene00013548"/>
<dbReference type="CTD" id="190703"/>
<dbReference type="WormBase" id="Y75B8A.11a">
    <property type="protein sequence ID" value="CE47414"/>
    <property type="gene ID" value="WBGene00013548"/>
    <property type="gene designation" value="lury-1"/>
</dbReference>
<dbReference type="eggNOG" id="ENOG502TIFM">
    <property type="taxonomic scope" value="Eukaryota"/>
</dbReference>
<dbReference type="HOGENOM" id="CLU_2485315_0_0_1"/>
<dbReference type="InParanoid" id="Q9XW71"/>
<dbReference type="OMA" id="YICLPVD"/>
<dbReference type="OrthoDB" id="5865274at2759"/>
<dbReference type="PRO" id="PR:Q9XW71"/>
<dbReference type="Proteomes" id="UP000001940">
    <property type="component" value="Chromosome III"/>
</dbReference>
<dbReference type="Bgee" id="WBGene00013548">
    <property type="expression patterns" value="Expressed in larva and 3 other cell types or tissues"/>
</dbReference>
<dbReference type="GO" id="GO:0005576">
    <property type="term" value="C:extracellular region"/>
    <property type="evidence" value="ECO:0007669"/>
    <property type="project" value="UniProtKB-SubCell"/>
</dbReference>
<dbReference type="GO" id="GO:0071855">
    <property type="term" value="F:neuropeptide receptor binding"/>
    <property type="evidence" value="ECO:0000314"/>
    <property type="project" value="UniProtKB"/>
</dbReference>
<dbReference type="GO" id="GO:0008340">
    <property type="term" value="P:determination of adult lifespan"/>
    <property type="evidence" value="ECO:0000315"/>
    <property type="project" value="UniProtKB"/>
</dbReference>
<dbReference type="GO" id="GO:2000252">
    <property type="term" value="P:negative regulation of feeding behavior"/>
    <property type="evidence" value="ECO:0000315"/>
    <property type="project" value="UniProtKB"/>
</dbReference>
<dbReference type="GO" id="GO:0040013">
    <property type="term" value="P:negative regulation of locomotion"/>
    <property type="evidence" value="ECO:0000315"/>
    <property type="project" value="UniProtKB"/>
</dbReference>
<dbReference type="GO" id="GO:0007218">
    <property type="term" value="P:neuropeptide signaling pathway"/>
    <property type="evidence" value="ECO:0007669"/>
    <property type="project" value="UniProtKB-KW"/>
</dbReference>
<dbReference type="GO" id="GO:1901046">
    <property type="term" value="P:positive regulation of egg-laying behavior"/>
    <property type="evidence" value="ECO:0000315"/>
    <property type="project" value="UniProtKB"/>
</dbReference>
<evidence type="ECO:0000255" key="1"/>
<evidence type="ECO:0000269" key="2">
    <source>
    </source>
</evidence>
<evidence type="ECO:0000303" key="3">
    <source>
    </source>
</evidence>
<evidence type="ECO:0000305" key="4"/>
<evidence type="ECO:0000305" key="5">
    <source>
    </source>
</evidence>
<evidence type="ECO:0000312" key="6">
    <source>
        <dbReference type="Proteomes" id="UP000001940"/>
    </source>
</evidence>
<evidence type="ECO:0000312" key="7">
    <source>
        <dbReference type="WormBase" id="Y75B8A.11a"/>
    </source>
</evidence>
<name>LURY1_CAEEL</name>
<gene>
    <name evidence="3" type="primary">lury-1</name>
    <name evidence="7" type="ORF">Y75B8A.11</name>
</gene>
<proteinExistence type="evidence at protein level"/>
<keyword id="KW-0027">Amidation</keyword>
<keyword id="KW-0165">Cleavage on pair of basic residues</keyword>
<keyword id="KW-0903">Direct protein sequencing</keyword>
<keyword id="KW-0527">Neuropeptide</keyword>
<keyword id="KW-1185">Reference proteome</keyword>
<keyword id="KW-0964">Secreted</keyword>
<keyword id="KW-0732">Signal</keyword>
<protein>
    <recommendedName>
        <fullName evidence="3">Luqin-like RYamide peptides lury-1</fullName>
    </recommendedName>
    <component>
        <recommendedName>
            <fullName evidence="3">LURY-1-1</fullName>
        </recommendedName>
    </component>
    <component>
        <recommendedName>
            <fullName evidence="3">LURY-1-2</fullName>
        </recommendedName>
    </component>
</protein>